<dbReference type="EMBL" id="CP000469">
    <property type="protein sequence ID" value="ABK50327.1"/>
    <property type="molecule type" value="Genomic_DNA"/>
</dbReference>
<dbReference type="SMR" id="A0L2Q8"/>
<dbReference type="STRING" id="94122.Shewana3_4110"/>
<dbReference type="KEGG" id="shn:Shewana3_4110"/>
<dbReference type="eggNOG" id="COG0218">
    <property type="taxonomic scope" value="Bacteria"/>
</dbReference>
<dbReference type="HOGENOM" id="CLU_033732_1_2_6"/>
<dbReference type="OrthoDB" id="9804921at2"/>
<dbReference type="Proteomes" id="UP000002589">
    <property type="component" value="Chromosome"/>
</dbReference>
<dbReference type="GO" id="GO:0005829">
    <property type="term" value="C:cytosol"/>
    <property type="evidence" value="ECO:0007669"/>
    <property type="project" value="TreeGrafter"/>
</dbReference>
<dbReference type="GO" id="GO:0005525">
    <property type="term" value="F:GTP binding"/>
    <property type="evidence" value="ECO:0007669"/>
    <property type="project" value="UniProtKB-UniRule"/>
</dbReference>
<dbReference type="GO" id="GO:0046872">
    <property type="term" value="F:metal ion binding"/>
    <property type="evidence" value="ECO:0007669"/>
    <property type="project" value="UniProtKB-KW"/>
</dbReference>
<dbReference type="GO" id="GO:0000917">
    <property type="term" value="P:division septum assembly"/>
    <property type="evidence" value="ECO:0007669"/>
    <property type="project" value="UniProtKB-KW"/>
</dbReference>
<dbReference type="CDD" id="cd01876">
    <property type="entry name" value="YihA_EngB"/>
    <property type="match status" value="1"/>
</dbReference>
<dbReference type="FunFam" id="3.40.50.300:FF:000098">
    <property type="entry name" value="Probable GTP-binding protein EngB"/>
    <property type="match status" value="1"/>
</dbReference>
<dbReference type="Gene3D" id="3.40.50.300">
    <property type="entry name" value="P-loop containing nucleotide triphosphate hydrolases"/>
    <property type="match status" value="1"/>
</dbReference>
<dbReference type="HAMAP" id="MF_00321">
    <property type="entry name" value="GTPase_EngB"/>
    <property type="match status" value="1"/>
</dbReference>
<dbReference type="InterPro" id="IPR030393">
    <property type="entry name" value="G_ENGB_dom"/>
</dbReference>
<dbReference type="InterPro" id="IPR006073">
    <property type="entry name" value="GTP-bd"/>
</dbReference>
<dbReference type="InterPro" id="IPR019987">
    <property type="entry name" value="GTP-bd_ribosome_bio_YsxC"/>
</dbReference>
<dbReference type="InterPro" id="IPR027417">
    <property type="entry name" value="P-loop_NTPase"/>
</dbReference>
<dbReference type="NCBIfam" id="TIGR03598">
    <property type="entry name" value="GTPase_YsxC"/>
    <property type="match status" value="1"/>
</dbReference>
<dbReference type="PANTHER" id="PTHR11649:SF13">
    <property type="entry name" value="ENGB-TYPE G DOMAIN-CONTAINING PROTEIN"/>
    <property type="match status" value="1"/>
</dbReference>
<dbReference type="PANTHER" id="PTHR11649">
    <property type="entry name" value="MSS1/TRME-RELATED GTP-BINDING PROTEIN"/>
    <property type="match status" value="1"/>
</dbReference>
<dbReference type="Pfam" id="PF01926">
    <property type="entry name" value="MMR_HSR1"/>
    <property type="match status" value="1"/>
</dbReference>
<dbReference type="SUPFAM" id="SSF52540">
    <property type="entry name" value="P-loop containing nucleoside triphosphate hydrolases"/>
    <property type="match status" value="1"/>
</dbReference>
<dbReference type="PROSITE" id="PS51706">
    <property type="entry name" value="G_ENGB"/>
    <property type="match status" value="1"/>
</dbReference>
<keyword id="KW-0131">Cell cycle</keyword>
<keyword id="KW-0132">Cell division</keyword>
<keyword id="KW-0342">GTP-binding</keyword>
<keyword id="KW-0460">Magnesium</keyword>
<keyword id="KW-0479">Metal-binding</keyword>
<keyword id="KW-0547">Nucleotide-binding</keyword>
<keyword id="KW-0717">Septation</keyword>
<sequence length="219" mass="24440">MTESHIDFRRAKFLISAPDIAHLDQYLPGDVGVEIAFAGRSNAGKSSALNALTEQKNLARTSKTPGRTQLINVFELDAQRRLVDLPGYGFAQVPLAMKLKWQQSLGEYLQKRACLSGVVVLMDIRHPLKDLDMQMIEWAVASEIPVLALLTKSDKLAQSAKMKTVNEVRKALVEFGDWVQVEPFSALKGTGKPKVLSILNEWCHPQWLADELENQDDAE</sequence>
<protein>
    <recommendedName>
        <fullName evidence="1">Probable GTP-binding protein EngB</fullName>
    </recommendedName>
</protein>
<comment type="function">
    <text evidence="1">Necessary for normal cell division and for the maintenance of normal septation.</text>
</comment>
<comment type="cofactor">
    <cofactor evidence="1">
        <name>Mg(2+)</name>
        <dbReference type="ChEBI" id="CHEBI:18420"/>
    </cofactor>
</comment>
<comment type="similarity">
    <text evidence="1">Belongs to the TRAFAC class TrmE-Era-EngA-EngB-Septin-like GTPase superfamily. EngB GTPase family.</text>
</comment>
<gene>
    <name evidence="1" type="primary">engB</name>
    <name type="ordered locus">Shewana3_4110</name>
</gene>
<reference key="1">
    <citation type="submission" date="2006-09" db="EMBL/GenBank/DDBJ databases">
        <title>Complete sequence of chromosome 1 of Shewanella sp. ANA-3.</title>
        <authorList>
            <person name="Copeland A."/>
            <person name="Lucas S."/>
            <person name="Lapidus A."/>
            <person name="Barry K."/>
            <person name="Detter J.C."/>
            <person name="Glavina del Rio T."/>
            <person name="Hammon N."/>
            <person name="Israni S."/>
            <person name="Dalin E."/>
            <person name="Tice H."/>
            <person name="Pitluck S."/>
            <person name="Chertkov O."/>
            <person name="Brettin T."/>
            <person name="Bruce D."/>
            <person name="Han C."/>
            <person name="Tapia R."/>
            <person name="Gilna P."/>
            <person name="Schmutz J."/>
            <person name="Larimer F."/>
            <person name="Land M."/>
            <person name="Hauser L."/>
            <person name="Kyrpides N."/>
            <person name="Kim E."/>
            <person name="Newman D."/>
            <person name="Salticov C."/>
            <person name="Konstantinidis K."/>
            <person name="Klappenback J."/>
            <person name="Tiedje J."/>
            <person name="Richardson P."/>
        </authorList>
    </citation>
    <scope>NUCLEOTIDE SEQUENCE [LARGE SCALE GENOMIC DNA]</scope>
    <source>
        <strain>ANA-3</strain>
    </source>
</reference>
<organism>
    <name type="scientific">Shewanella sp. (strain ANA-3)</name>
    <dbReference type="NCBI Taxonomy" id="94122"/>
    <lineage>
        <taxon>Bacteria</taxon>
        <taxon>Pseudomonadati</taxon>
        <taxon>Pseudomonadota</taxon>
        <taxon>Gammaproteobacteria</taxon>
        <taxon>Alteromonadales</taxon>
        <taxon>Shewanellaceae</taxon>
        <taxon>Shewanella</taxon>
    </lineage>
</organism>
<name>ENGB_SHESA</name>
<feature type="chain" id="PRO_1000005857" description="Probable GTP-binding protein EngB">
    <location>
        <begin position="1"/>
        <end position="219"/>
    </location>
</feature>
<feature type="domain" description="EngB-type G" evidence="1">
    <location>
        <begin position="31"/>
        <end position="205"/>
    </location>
</feature>
<feature type="binding site" evidence="1">
    <location>
        <begin position="39"/>
        <end position="46"/>
    </location>
    <ligand>
        <name>GTP</name>
        <dbReference type="ChEBI" id="CHEBI:37565"/>
    </ligand>
</feature>
<feature type="binding site" evidence="1">
    <location>
        <position position="46"/>
    </location>
    <ligand>
        <name>Mg(2+)</name>
        <dbReference type="ChEBI" id="CHEBI:18420"/>
    </ligand>
</feature>
<feature type="binding site" evidence="1">
    <location>
        <begin position="66"/>
        <end position="70"/>
    </location>
    <ligand>
        <name>GTP</name>
        <dbReference type="ChEBI" id="CHEBI:37565"/>
    </ligand>
</feature>
<feature type="binding site" evidence="1">
    <location>
        <position position="68"/>
    </location>
    <ligand>
        <name>Mg(2+)</name>
        <dbReference type="ChEBI" id="CHEBI:18420"/>
    </ligand>
</feature>
<feature type="binding site" evidence="1">
    <location>
        <begin position="84"/>
        <end position="87"/>
    </location>
    <ligand>
        <name>GTP</name>
        <dbReference type="ChEBI" id="CHEBI:37565"/>
    </ligand>
</feature>
<feature type="binding site" evidence="1">
    <location>
        <begin position="151"/>
        <end position="154"/>
    </location>
    <ligand>
        <name>GTP</name>
        <dbReference type="ChEBI" id="CHEBI:37565"/>
    </ligand>
</feature>
<feature type="binding site" evidence="1">
    <location>
        <begin position="184"/>
        <end position="186"/>
    </location>
    <ligand>
        <name>GTP</name>
        <dbReference type="ChEBI" id="CHEBI:37565"/>
    </ligand>
</feature>
<evidence type="ECO:0000255" key="1">
    <source>
        <dbReference type="HAMAP-Rule" id="MF_00321"/>
    </source>
</evidence>
<proteinExistence type="inferred from homology"/>
<accession>A0L2Q8</accession>